<organism>
    <name type="scientific">Escherichia coli O81 (strain ED1a)</name>
    <dbReference type="NCBI Taxonomy" id="585397"/>
    <lineage>
        <taxon>Bacteria</taxon>
        <taxon>Pseudomonadati</taxon>
        <taxon>Pseudomonadota</taxon>
        <taxon>Gammaproteobacteria</taxon>
        <taxon>Enterobacterales</taxon>
        <taxon>Enterobacteriaceae</taxon>
        <taxon>Escherichia</taxon>
    </lineage>
</organism>
<gene>
    <name evidence="1" type="primary">trpR</name>
    <name type="ordered locus">ECED1_5266</name>
</gene>
<evidence type="ECO:0000255" key="1">
    <source>
        <dbReference type="HAMAP-Rule" id="MF_00475"/>
    </source>
</evidence>
<name>TRPR_ECO81</name>
<reference key="1">
    <citation type="journal article" date="2009" name="PLoS Genet.">
        <title>Organised genome dynamics in the Escherichia coli species results in highly diverse adaptive paths.</title>
        <authorList>
            <person name="Touchon M."/>
            <person name="Hoede C."/>
            <person name="Tenaillon O."/>
            <person name="Barbe V."/>
            <person name="Baeriswyl S."/>
            <person name="Bidet P."/>
            <person name="Bingen E."/>
            <person name="Bonacorsi S."/>
            <person name="Bouchier C."/>
            <person name="Bouvet O."/>
            <person name="Calteau A."/>
            <person name="Chiapello H."/>
            <person name="Clermont O."/>
            <person name="Cruveiller S."/>
            <person name="Danchin A."/>
            <person name="Diard M."/>
            <person name="Dossat C."/>
            <person name="Karoui M.E."/>
            <person name="Frapy E."/>
            <person name="Garry L."/>
            <person name="Ghigo J.M."/>
            <person name="Gilles A.M."/>
            <person name="Johnson J."/>
            <person name="Le Bouguenec C."/>
            <person name="Lescat M."/>
            <person name="Mangenot S."/>
            <person name="Martinez-Jehanne V."/>
            <person name="Matic I."/>
            <person name="Nassif X."/>
            <person name="Oztas S."/>
            <person name="Petit M.A."/>
            <person name="Pichon C."/>
            <person name="Rouy Z."/>
            <person name="Ruf C.S."/>
            <person name="Schneider D."/>
            <person name="Tourret J."/>
            <person name="Vacherie B."/>
            <person name="Vallenet D."/>
            <person name="Medigue C."/>
            <person name="Rocha E.P.C."/>
            <person name="Denamur E."/>
        </authorList>
    </citation>
    <scope>NUCLEOTIDE SEQUENCE [LARGE SCALE GENOMIC DNA]</scope>
    <source>
        <strain>ED1a</strain>
    </source>
</reference>
<accession>B7N2W3</accession>
<feature type="chain" id="PRO_1000135544" description="Trp operon repressor">
    <location>
        <begin position="1"/>
        <end position="108"/>
    </location>
</feature>
<feature type="DNA-binding region" evidence="1">
    <location>
        <begin position="68"/>
        <end position="91"/>
    </location>
</feature>
<protein>
    <recommendedName>
        <fullName evidence="1">Trp operon repressor</fullName>
    </recommendedName>
</protein>
<proteinExistence type="inferred from homology"/>
<comment type="function">
    <text evidence="1">This protein is an aporepressor. When complexed with L-tryptophan it binds the operator region of the trp operon (5'-ACTAGT-'3') and prevents the initiation of transcription. The complex also regulates trp repressor biosynthesis by binding to its regulatory region.</text>
</comment>
<comment type="subunit">
    <text evidence="1">Homodimer.</text>
</comment>
<comment type="subcellular location">
    <subcellularLocation>
        <location evidence="1">Cytoplasm</location>
    </subcellularLocation>
</comment>
<comment type="similarity">
    <text evidence="1">Belongs to the TrpR family.</text>
</comment>
<sequence>MAQQSPYSAAMAEQRHQEWLRFVDLLKNAYQNDLHLPLLNLMLTPDEREALGTRVRIVEELLRGEMSQRELKNELGAGIATITRGSNSLKAAPVELRQWLEDVLLKSD</sequence>
<dbReference type="EMBL" id="CU928162">
    <property type="protein sequence ID" value="CAV18224.1"/>
    <property type="molecule type" value="Genomic_DNA"/>
</dbReference>
<dbReference type="RefSeq" id="WP_000068677.1">
    <property type="nucleotide sequence ID" value="NC_011745.1"/>
</dbReference>
<dbReference type="SMR" id="B7N2W3"/>
<dbReference type="GeneID" id="89519371"/>
<dbReference type="KEGG" id="ecq:ECED1_5266"/>
<dbReference type="HOGENOM" id="CLU_147939_0_0_6"/>
<dbReference type="Proteomes" id="UP000000748">
    <property type="component" value="Chromosome"/>
</dbReference>
<dbReference type="GO" id="GO:0005737">
    <property type="term" value="C:cytoplasm"/>
    <property type="evidence" value="ECO:0007669"/>
    <property type="project" value="UniProtKB-SubCell"/>
</dbReference>
<dbReference type="GO" id="GO:0003700">
    <property type="term" value="F:DNA-binding transcription factor activity"/>
    <property type="evidence" value="ECO:0007669"/>
    <property type="project" value="InterPro"/>
</dbReference>
<dbReference type="GO" id="GO:0043565">
    <property type="term" value="F:sequence-specific DNA binding"/>
    <property type="evidence" value="ECO:0007669"/>
    <property type="project" value="InterPro"/>
</dbReference>
<dbReference type="GO" id="GO:0045892">
    <property type="term" value="P:negative regulation of DNA-templated transcription"/>
    <property type="evidence" value="ECO:0007669"/>
    <property type="project" value="UniProtKB-UniRule"/>
</dbReference>
<dbReference type="FunFam" id="1.10.1270.10:FF:000001">
    <property type="entry name" value="Trp operon repressor"/>
    <property type="match status" value="1"/>
</dbReference>
<dbReference type="Gene3D" id="1.10.1270.10">
    <property type="entry name" value="TrpR-like"/>
    <property type="match status" value="1"/>
</dbReference>
<dbReference type="HAMAP" id="MF_00475">
    <property type="entry name" value="Trp_repressor"/>
    <property type="match status" value="1"/>
</dbReference>
<dbReference type="InterPro" id="IPR000831">
    <property type="entry name" value="Trp_repress"/>
</dbReference>
<dbReference type="InterPro" id="IPR013335">
    <property type="entry name" value="Trp_repress_bac"/>
</dbReference>
<dbReference type="InterPro" id="IPR010921">
    <property type="entry name" value="Trp_repressor/repl_initiator"/>
</dbReference>
<dbReference type="InterPro" id="IPR038116">
    <property type="entry name" value="TrpR-like_sf"/>
</dbReference>
<dbReference type="NCBIfam" id="TIGR01321">
    <property type="entry name" value="TrpR"/>
    <property type="match status" value="1"/>
</dbReference>
<dbReference type="PANTHER" id="PTHR38025">
    <property type="entry name" value="TRP OPERON REPRESSOR"/>
    <property type="match status" value="1"/>
</dbReference>
<dbReference type="PANTHER" id="PTHR38025:SF1">
    <property type="entry name" value="TRP OPERON REPRESSOR"/>
    <property type="match status" value="1"/>
</dbReference>
<dbReference type="Pfam" id="PF01371">
    <property type="entry name" value="Trp_repressor"/>
    <property type="match status" value="1"/>
</dbReference>
<dbReference type="PIRSF" id="PIRSF003196">
    <property type="entry name" value="Trp_repressor"/>
    <property type="match status" value="1"/>
</dbReference>
<dbReference type="SUPFAM" id="SSF48295">
    <property type="entry name" value="TrpR-like"/>
    <property type="match status" value="1"/>
</dbReference>
<keyword id="KW-0963">Cytoplasm</keyword>
<keyword id="KW-0238">DNA-binding</keyword>
<keyword id="KW-0678">Repressor</keyword>
<keyword id="KW-0804">Transcription</keyword>
<keyword id="KW-0805">Transcription regulation</keyword>